<name>ARGC_SYNP6</name>
<evidence type="ECO:0000255" key="1">
    <source>
        <dbReference type="HAMAP-Rule" id="MF_00150"/>
    </source>
</evidence>
<sequence>MHESSRLPVGIIGASGYGGVQLVRLLQDHPQLEVAYLGGDRSAGKEFAELYPHLGPHLNLTIEAIDVDRIAERCAAVFLSLPNGLAYDLAPALLERGCKVLDLSADYRFHDLKTYALWYGGDRQDAAVAHTAIYGLPELYRNRIANAQLIGCPGCYPTASLLALAPALKQGLIDPDTIVIDAKSGTSGAGRQAKTNALLAEAGNSVGAYGVARHRHTPEIEQICSDLSGHEVLLQFTPHLMPMVRGIHATIYAKLRDPNLTTEDCLTVYQAFYRNAPMVKVLTHGTYPQTKWAAGTNLCYLGLEVDARTGRIVLLSAIDNLIKGQAGQAIQCLNLMQGWEEGLGLPTLCYYP</sequence>
<keyword id="KW-0028">Amino-acid biosynthesis</keyword>
<keyword id="KW-0055">Arginine biosynthesis</keyword>
<keyword id="KW-0963">Cytoplasm</keyword>
<keyword id="KW-0521">NADP</keyword>
<keyword id="KW-0560">Oxidoreductase</keyword>
<gene>
    <name evidence="1" type="primary">argC</name>
    <name type="ordered locus">syc0123_c</name>
</gene>
<proteinExistence type="inferred from homology"/>
<organism>
    <name type="scientific">Synechococcus sp. (strain ATCC 27144 / PCC 6301 / SAUG 1402/1)</name>
    <name type="common">Anacystis nidulans</name>
    <dbReference type="NCBI Taxonomy" id="269084"/>
    <lineage>
        <taxon>Bacteria</taxon>
        <taxon>Bacillati</taxon>
        <taxon>Cyanobacteriota</taxon>
        <taxon>Cyanophyceae</taxon>
        <taxon>Synechococcales</taxon>
        <taxon>Synechococcaceae</taxon>
        <taxon>Synechococcus</taxon>
    </lineage>
</organism>
<accession>Q5N5V5</accession>
<dbReference type="EC" id="1.2.1.38" evidence="1"/>
<dbReference type="EMBL" id="AP008231">
    <property type="protein sequence ID" value="BAD78313.1"/>
    <property type="molecule type" value="Genomic_DNA"/>
</dbReference>
<dbReference type="RefSeq" id="WP_011242437.1">
    <property type="nucleotide sequence ID" value="NZ_CP085785.1"/>
</dbReference>
<dbReference type="SMR" id="Q5N5V5"/>
<dbReference type="GeneID" id="72430296"/>
<dbReference type="KEGG" id="syc:syc0123_c"/>
<dbReference type="eggNOG" id="COG0002">
    <property type="taxonomic scope" value="Bacteria"/>
</dbReference>
<dbReference type="UniPathway" id="UPA00068">
    <property type="reaction ID" value="UER00108"/>
</dbReference>
<dbReference type="Proteomes" id="UP000001175">
    <property type="component" value="Chromosome"/>
</dbReference>
<dbReference type="GO" id="GO:0005737">
    <property type="term" value="C:cytoplasm"/>
    <property type="evidence" value="ECO:0007669"/>
    <property type="project" value="UniProtKB-SubCell"/>
</dbReference>
<dbReference type="GO" id="GO:0003942">
    <property type="term" value="F:N-acetyl-gamma-glutamyl-phosphate reductase activity"/>
    <property type="evidence" value="ECO:0007669"/>
    <property type="project" value="UniProtKB-UniRule"/>
</dbReference>
<dbReference type="GO" id="GO:0051287">
    <property type="term" value="F:NAD binding"/>
    <property type="evidence" value="ECO:0007669"/>
    <property type="project" value="InterPro"/>
</dbReference>
<dbReference type="GO" id="GO:0070401">
    <property type="term" value="F:NADP+ binding"/>
    <property type="evidence" value="ECO:0007669"/>
    <property type="project" value="InterPro"/>
</dbReference>
<dbReference type="GO" id="GO:0006526">
    <property type="term" value="P:L-arginine biosynthetic process"/>
    <property type="evidence" value="ECO:0007669"/>
    <property type="project" value="UniProtKB-UniRule"/>
</dbReference>
<dbReference type="CDD" id="cd23934">
    <property type="entry name" value="AGPR_1_C"/>
    <property type="match status" value="1"/>
</dbReference>
<dbReference type="CDD" id="cd17895">
    <property type="entry name" value="AGPR_1_N"/>
    <property type="match status" value="1"/>
</dbReference>
<dbReference type="FunFam" id="3.30.360.10:FF:000014">
    <property type="entry name" value="N-acetyl-gamma-glutamyl-phosphate reductase"/>
    <property type="match status" value="1"/>
</dbReference>
<dbReference type="Gene3D" id="3.30.360.10">
    <property type="entry name" value="Dihydrodipicolinate Reductase, domain 2"/>
    <property type="match status" value="1"/>
</dbReference>
<dbReference type="Gene3D" id="3.40.50.720">
    <property type="entry name" value="NAD(P)-binding Rossmann-like Domain"/>
    <property type="match status" value="1"/>
</dbReference>
<dbReference type="HAMAP" id="MF_00150">
    <property type="entry name" value="ArgC_type1"/>
    <property type="match status" value="1"/>
</dbReference>
<dbReference type="InterPro" id="IPR023013">
    <property type="entry name" value="AGPR_AS"/>
</dbReference>
<dbReference type="InterPro" id="IPR000706">
    <property type="entry name" value="AGPR_type-1"/>
</dbReference>
<dbReference type="InterPro" id="IPR036291">
    <property type="entry name" value="NAD(P)-bd_dom_sf"/>
</dbReference>
<dbReference type="InterPro" id="IPR050085">
    <property type="entry name" value="NAGSA_dehydrogenase"/>
</dbReference>
<dbReference type="InterPro" id="IPR000534">
    <property type="entry name" value="Semialdehyde_DH_NAD-bd"/>
</dbReference>
<dbReference type="NCBIfam" id="TIGR01850">
    <property type="entry name" value="argC"/>
    <property type="match status" value="1"/>
</dbReference>
<dbReference type="PANTHER" id="PTHR32338:SF10">
    <property type="entry name" value="N-ACETYL-GAMMA-GLUTAMYL-PHOSPHATE REDUCTASE, CHLOROPLASTIC-RELATED"/>
    <property type="match status" value="1"/>
</dbReference>
<dbReference type="PANTHER" id="PTHR32338">
    <property type="entry name" value="N-ACETYL-GAMMA-GLUTAMYL-PHOSPHATE REDUCTASE, CHLOROPLASTIC-RELATED-RELATED"/>
    <property type="match status" value="1"/>
</dbReference>
<dbReference type="Pfam" id="PF01118">
    <property type="entry name" value="Semialdhyde_dh"/>
    <property type="match status" value="1"/>
</dbReference>
<dbReference type="Pfam" id="PF22698">
    <property type="entry name" value="Semialdhyde_dhC_1"/>
    <property type="match status" value="1"/>
</dbReference>
<dbReference type="SMART" id="SM00859">
    <property type="entry name" value="Semialdhyde_dh"/>
    <property type="match status" value="1"/>
</dbReference>
<dbReference type="SUPFAM" id="SSF55347">
    <property type="entry name" value="Glyceraldehyde-3-phosphate dehydrogenase-like, C-terminal domain"/>
    <property type="match status" value="1"/>
</dbReference>
<dbReference type="SUPFAM" id="SSF51735">
    <property type="entry name" value="NAD(P)-binding Rossmann-fold domains"/>
    <property type="match status" value="1"/>
</dbReference>
<dbReference type="PROSITE" id="PS01224">
    <property type="entry name" value="ARGC"/>
    <property type="match status" value="1"/>
</dbReference>
<reference key="1">
    <citation type="journal article" date="2007" name="Photosyn. Res.">
        <title>Complete nucleotide sequence of the freshwater unicellular cyanobacterium Synechococcus elongatus PCC 6301 chromosome: gene content and organization.</title>
        <authorList>
            <person name="Sugita C."/>
            <person name="Ogata K."/>
            <person name="Shikata M."/>
            <person name="Jikuya H."/>
            <person name="Takano J."/>
            <person name="Furumichi M."/>
            <person name="Kanehisa M."/>
            <person name="Omata T."/>
            <person name="Sugiura M."/>
            <person name="Sugita M."/>
        </authorList>
    </citation>
    <scope>NUCLEOTIDE SEQUENCE [LARGE SCALE GENOMIC DNA]</scope>
    <source>
        <strain>ATCC 27144 / PCC 6301 / SAUG 1402/1</strain>
    </source>
</reference>
<comment type="function">
    <text evidence="1">Catalyzes the NADPH-dependent reduction of N-acetyl-5-glutamyl phosphate to yield N-acetyl-L-glutamate 5-semialdehyde.</text>
</comment>
<comment type="catalytic activity">
    <reaction evidence="1">
        <text>N-acetyl-L-glutamate 5-semialdehyde + phosphate + NADP(+) = N-acetyl-L-glutamyl 5-phosphate + NADPH + H(+)</text>
        <dbReference type="Rhea" id="RHEA:21588"/>
        <dbReference type="ChEBI" id="CHEBI:15378"/>
        <dbReference type="ChEBI" id="CHEBI:29123"/>
        <dbReference type="ChEBI" id="CHEBI:43474"/>
        <dbReference type="ChEBI" id="CHEBI:57783"/>
        <dbReference type="ChEBI" id="CHEBI:57936"/>
        <dbReference type="ChEBI" id="CHEBI:58349"/>
        <dbReference type="EC" id="1.2.1.38"/>
    </reaction>
</comment>
<comment type="pathway">
    <text evidence="1">Amino-acid biosynthesis; L-arginine biosynthesis; N(2)-acetyl-L-ornithine from L-glutamate: step 3/4.</text>
</comment>
<comment type="subcellular location">
    <subcellularLocation>
        <location evidence="1">Cytoplasm</location>
    </subcellularLocation>
</comment>
<comment type="similarity">
    <text evidence="1">Belongs to the NAGSA dehydrogenase family. Type 1 subfamily.</text>
</comment>
<protein>
    <recommendedName>
        <fullName evidence="1">N-acetyl-gamma-glutamyl-phosphate reductase</fullName>
        <shortName evidence="1">AGPR</shortName>
        <ecNumber evidence="1">1.2.1.38</ecNumber>
    </recommendedName>
    <alternativeName>
        <fullName evidence="1">N-acetyl-glutamate semialdehyde dehydrogenase</fullName>
        <shortName evidence="1">NAGSA dehydrogenase</shortName>
    </alternativeName>
</protein>
<feature type="chain" id="PRO_0000112464" description="N-acetyl-gamma-glutamyl-phosphate reductase">
    <location>
        <begin position="1"/>
        <end position="352"/>
    </location>
</feature>
<feature type="active site" evidence="1">
    <location>
        <position position="155"/>
    </location>
</feature>